<dbReference type="EMBL" id="CP000946">
    <property type="protein sequence ID" value="ACA78492.1"/>
    <property type="molecule type" value="Genomic_DNA"/>
</dbReference>
<dbReference type="RefSeq" id="WP_000042533.1">
    <property type="nucleotide sequence ID" value="NZ_MTFT01000003.1"/>
</dbReference>
<dbReference type="BMRB" id="B1IXI9"/>
<dbReference type="SMR" id="B1IXI9"/>
<dbReference type="GeneID" id="93776651"/>
<dbReference type="KEGG" id="ecl:EcolC_2864"/>
<dbReference type="HOGENOM" id="CLU_009621_2_1_6"/>
<dbReference type="GO" id="GO:0005737">
    <property type="term" value="C:cytoplasm"/>
    <property type="evidence" value="ECO:0007669"/>
    <property type="project" value="UniProtKB-SubCell"/>
</dbReference>
<dbReference type="GO" id="GO:0009380">
    <property type="term" value="C:excinuclease repair complex"/>
    <property type="evidence" value="ECO:0007669"/>
    <property type="project" value="InterPro"/>
</dbReference>
<dbReference type="GO" id="GO:0005524">
    <property type="term" value="F:ATP binding"/>
    <property type="evidence" value="ECO:0007669"/>
    <property type="project" value="UniProtKB-UniRule"/>
</dbReference>
<dbReference type="GO" id="GO:0016887">
    <property type="term" value="F:ATP hydrolysis activity"/>
    <property type="evidence" value="ECO:0007669"/>
    <property type="project" value="InterPro"/>
</dbReference>
<dbReference type="GO" id="GO:0003677">
    <property type="term" value="F:DNA binding"/>
    <property type="evidence" value="ECO:0007669"/>
    <property type="project" value="UniProtKB-UniRule"/>
</dbReference>
<dbReference type="GO" id="GO:0009381">
    <property type="term" value="F:excinuclease ABC activity"/>
    <property type="evidence" value="ECO:0007669"/>
    <property type="project" value="UniProtKB-UniRule"/>
</dbReference>
<dbReference type="GO" id="GO:0004386">
    <property type="term" value="F:helicase activity"/>
    <property type="evidence" value="ECO:0007669"/>
    <property type="project" value="UniProtKB-KW"/>
</dbReference>
<dbReference type="GO" id="GO:0006289">
    <property type="term" value="P:nucleotide-excision repair"/>
    <property type="evidence" value="ECO:0007669"/>
    <property type="project" value="UniProtKB-UniRule"/>
</dbReference>
<dbReference type="GO" id="GO:0009432">
    <property type="term" value="P:SOS response"/>
    <property type="evidence" value="ECO:0007669"/>
    <property type="project" value="UniProtKB-UniRule"/>
</dbReference>
<dbReference type="CDD" id="cd17916">
    <property type="entry name" value="DEXHc_UvrB"/>
    <property type="match status" value="1"/>
</dbReference>
<dbReference type="CDD" id="cd18790">
    <property type="entry name" value="SF2_C_UvrB"/>
    <property type="match status" value="1"/>
</dbReference>
<dbReference type="FunFam" id="3.40.50.300:FF:000257">
    <property type="entry name" value="UvrABC system protein B"/>
    <property type="match status" value="1"/>
</dbReference>
<dbReference type="FunFam" id="3.40.50.300:FF:000401">
    <property type="entry name" value="UvrABC system protein B"/>
    <property type="match status" value="1"/>
</dbReference>
<dbReference type="FunFam" id="3.40.50.300:FF:000477">
    <property type="entry name" value="UvrABC system protein B"/>
    <property type="match status" value="1"/>
</dbReference>
<dbReference type="Gene3D" id="3.40.50.300">
    <property type="entry name" value="P-loop containing nucleotide triphosphate hydrolases"/>
    <property type="match status" value="3"/>
</dbReference>
<dbReference type="Gene3D" id="4.10.860.10">
    <property type="entry name" value="UVR domain"/>
    <property type="match status" value="1"/>
</dbReference>
<dbReference type="HAMAP" id="MF_00204">
    <property type="entry name" value="UvrB"/>
    <property type="match status" value="1"/>
</dbReference>
<dbReference type="InterPro" id="IPR006935">
    <property type="entry name" value="Helicase/UvrB_N"/>
</dbReference>
<dbReference type="InterPro" id="IPR014001">
    <property type="entry name" value="Helicase_ATP-bd"/>
</dbReference>
<dbReference type="InterPro" id="IPR001650">
    <property type="entry name" value="Helicase_C-like"/>
</dbReference>
<dbReference type="InterPro" id="IPR027417">
    <property type="entry name" value="P-loop_NTPase"/>
</dbReference>
<dbReference type="InterPro" id="IPR001943">
    <property type="entry name" value="UVR_dom"/>
</dbReference>
<dbReference type="InterPro" id="IPR036876">
    <property type="entry name" value="UVR_dom_sf"/>
</dbReference>
<dbReference type="InterPro" id="IPR004807">
    <property type="entry name" value="UvrB"/>
</dbReference>
<dbReference type="InterPro" id="IPR041471">
    <property type="entry name" value="UvrB_inter"/>
</dbReference>
<dbReference type="InterPro" id="IPR024759">
    <property type="entry name" value="UvrB_YAD/RRR_dom"/>
</dbReference>
<dbReference type="NCBIfam" id="NF003673">
    <property type="entry name" value="PRK05298.1"/>
    <property type="match status" value="1"/>
</dbReference>
<dbReference type="NCBIfam" id="TIGR00631">
    <property type="entry name" value="uvrb"/>
    <property type="match status" value="1"/>
</dbReference>
<dbReference type="PANTHER" id="PTHR24029">
    <property type="entry name" value="UVRABC SYSTEM PROTEIN B"/>
    <property type="match status" value="1"/>
</dbReference>
<dbReference type="PANTHER" id="PTHR24029:SF0">
    <property type="entry name" value="UVRABC SYSTEM PROTEIN B"/>
    <property type="match status" value="1"/>
</dbReference>
<dbReference type="Pfam" id="PF00271">
    <property type="entry name" value="Helicase_C"/>
    <property type="match status" value="1"/>
</dbReference>
<dbReference type="Pfam" id="PF04851">
    <property type="entry name" value="ResIII"/>
    <property type="match status" value="1"/>
</dbReference>
<dbReference type="Pfam" id="PF02151">
    <property type="entry name" value="UVR"/>
    <property type="match status" value="1"/>
</dbReference>
<dbReference type="Pfam" id="PF12344">
    <property type="entry name" value="UvrB"/>
    <property type="match status" value="1"/>
</dbReference>
<dbReference type="Pfam" id="PF17757">
    <property type="entry name" value="UvrB_inter"/>
    <property type="match status" value="1"/>
</dbReference>
<dbReference type="SMART" id="SM00487">
    <property type="entry name" value="DEXDc"/>
    <property type="match status" value="1"/>
</dbReference>
<dbReference type="SMART" id="SM00490">
    <property type="entry name" value="HELICc"/>
    <property type="match status" value="1"/>
</dbReference>
<dbReference type="SUPFAM" id="SSF46600">
    <property type="entry name" value="C-terminal UvrC-binding domain of UvrB"/>
    <property type="match status" value="1"/>
</dbReference>
<dbReference type="SUPFAM" id="SSF52540">
    <property type="entry name" value="P-loop containing nucleoside triphosphate hydrolases"/>
    <property type="match status" value="2"/>
</dbReference>
<dbReference type="PROSITE" id="PS51192">
    <property type="entry name" value="HELICASE_ATP_BIND_1"/>
    <property type="match status" value="1"/>
</dbReference>
<dbReference type="PROSITE" id="PS51194">
    <property type="entry name" value="HELICASE_CTER"/>
    <property type="match status" value="1"/>
</dbReference>
<dbReference type="PROSITE" id="PS50151">
    <property type="entry name" value="UVR"/>
    <property type="match status" value="1"/>
</dbReference>
<reference key="1">
    <citation type="submission" date="2008-02" db="EMBL/GenBank/DDBJ databases">
        <title>Complete sequence of Escherichia coli C str. ATCC 8739.</title>
        <authorList>
            <person name="Copeland A."/>
            <person name="Lucas S."/>
            <person name="Lapidus A."/>
            <person name="Glavina del Rio T."/>
            <person name="Dalin E."/>
            <person name="Tice H."/>
            <person name="Bruce D."/>
            <person name="Goodwin L."/>
            <person name="Pitluck S."/>
            <person name="Kiss H."/>
            <person name="Brettin T."/>
            <person name="Detter J.C."/>
            <person name="Han C."/>
            <person name="Kuske C.R."/>
            <person name="Schmutz J."/>
            <person name="Larimer F."/>
            <person name="Land M."/>
            <person name="Hauser L."/>
            <person name="Kyrpides N."/>
            <person name="Mikhailova N."/>
            <person name="Ingram L."/>
            <person name="Richardson P."/>
        </authorList>
    </citation>
    <scope>NUCLEOTIDE SEQUENCE [LARGE SCALE GENOMIC DNA]</scope>
    <source>
        <strain>ATCC 8739 / DSM 1576 / NBRC 3972 / NCIMB 8545 / WDCM 00012 / Crooks</strain>
    </source>
</reference>
<evidence type="ECO:0000255" key="1">
    <source>
        <dbReference type="HAMAP-Rule" id="MF_00204"/>
    </source>
</evidence>
<evidence type="ECO:0000256" key="2">
    <source>
        <dbReference type="SAM" id="MobiDB-lite"/>
    </source>
</evidence>
<protein>
    <recommendedName>
        <fullName evidence="1">UvrABC system protein B</fullName>
        <shortName evidence="1">Protein UvrB</shortName>
    </recommendedName>
    <alternativeName>
        <fullName evidence="1">Excinuclease ABC subunit B</fullName>
    </alternativeName>
</protein>
<gene>
    <name evidence="1" type="primary">uvrB</name>
    <name type="ordered locus">EcolC_2864</name>
</gene>
<name>UVRB_ECOLC</name>
<comment type="function">
    <text evidence="1">The UvrABC repair system catalyzes the recognition and processing of DNA lesions. A damage recognition complex composed of 2 UvrA and 2 UvrB subunits scans DNA for abnormalities. Upon binding of the UvrA(2)B(2) complex to a putative damaged site, the DNA wraps around one UvrB monomer. DNA wrap is dependent on ATP binding by UvrB and probably causes local melting of the DNA helix, facilitating insertion of UvrB beta-hairpin between the DNA strands. Then UvrB probes one DNA strand for the presence of a lesion. If a lesion is found the UvrA subunits dissociate and the UvrB-DNA preincision complex is formed. This complex is subsequently bound by UvrC and the second UvrB is released. If no lesion is found, the DNA wraps around the other UvrB subunit that will check the other stand for damage.</text>
</comment>
<comment type="subunit">
    <text evidence="1">Forms a heterotetramer with UvrA during the search for lesions. Interacts with UvrC in an incision complex.</text>
</comment>
<comment type="subcellular location">
    <subcellularLocation>
        <location evidence="1">Cytoplasm</location>
    </subcellularLocation>
</comment>
<comment type="domain">
    <text evidence="1">The beta-hairpin motif is involved in DNA binding.</text>
</comment>
<comment type="similarity">
    <text evidence="1">Belongs to the UvrB family.</text>
</comment>
<accession>B1IXI9</accession>
<keyword id="KW-0067">ATP-binding</keyword>
<keyword id="KW-0963">Cytoplasm</keyword>
<keyword id="KW-0227">DNA damage</keyword>
<keyword id="KW-0228">DNA excision</keyword>
<keyword id="KW-0234">DNA repair</keyword>
<keyword id="KW-0267">Excision nuclease</keyword>
<keyword id="KW-0347">Helicase</keyword>
<keyword id="KW-0378">Hydrolase</keyword>
<keyword id="KW-0547">Nucleotide-binding</keyword>
<keyword id="KW-0742">SOS response</keyword>
<proteinExistence type="inferred from homology"/>
<organism>
    <name type="scientific">Escherichia coli (strain ATCC 8739 / DSM 1576 / NBRC 3972 / NCIMB 8545 / WDCM 00012 / Crooks)</name>
    <dbReference type="NCBI Taxonomy" id="481805"/>
    <lineage>
        <taxon>Bacteria</taxon>
        <taxon>Pseudomonadati</taxon>
        <taxon>Pseudomonadota</taxon>
        <taxon>Gammaproteobacteria</taxon>
        <taxon>Enterobacterales</taxon>
        <taxon>Enterobacteriaceae</taxon>
        <taxon>Escherichia</taxon>
    </lineage>
</organism>
<feature type="chain" id="PRO_1000077890" description="UvrABC system protein B">
    <location>
        <begin position="1"/>
        <end position="673"/>
    </location>
</feature>
<feature type="domain" description="Helicase ATP-binding" evidence="1">
    <location>
        <begin position="26"/>
        <end position="183"/>
    </location>
</feature>
<feature type="domain" description="Helicase C-terminal" evidence="1">
    <location>
        <begin position="431"/>
        <end position="597"/>
    </location>
</feature>
<feature type="domain" description="UVR" evidence="1">
    <location>
        <begin position="633"/>
        <end position="668"/>
    </location>
</feature>
<feature type="region of interest" description="Disordered" evidence="2">
    <location>
        <begin position="608"/>
        <end position="627"/>
    </location>
</feature>
<feature type="short sequence motif" description="Beta-hairpin">
    <location>
        <begin position="92"/>
        <end position="115"/>
    </location>
</feature>
<feature type="binding site" evidence="1">
    <location>
        <begin position="39"/>
        <end position="46"/>
    </location>
    <ligand>
        <name>ATP</name>
        <dbReference type="ChEBI" id="CHEBI:30616"/>
    </ligand>
</feature>
<sequence length="673" mass="76226">MSKPFKLNSAFKPSGDQPEAIRRLEEGLEDGLAHQTLLGVTGSGKTFTIANVIADLQRPTMVLAPNKTLAAQLYGEMKEFFPENAVEYFVSYYDYYQPEAYVPSSDTFIEKDASVNEHIEQMRLSATKAMLERRDVVVVASVSAIYGLGDPDLYLKMMLHLTVGMIIDQRAILRRLAELQYARNDQAFQRGTFRVRGEVIDIFPAESDDIALRVELFDEEVERLSLFDPLTGQIVSTIPRFTIYPKTHYVTPRERIVQAMEEIKEELAARRKVLLENNKLLEEQRLTQRTQFDLEMMNELGYCSGIENYSRFLSGRGPGEPPPTLFDYLPADGLLVVDESHVTIPQIGGMYRGDRARKETLVEYGFRLPSALDNRPLKFEEFEALAPQTIYVSATPGNYELEKSGGDVVDQVVRPTGLLDPIIEVRPVATQVDDLLSEIRQRAAINERVLVTTLTKRMAEDLTEYLEEHGERVRYLHSDIDTVERMEIIRDLRLGEFDVLVGINLLREGLDMPEVSLVAILDADKEGFLRSERSLIQTIGRAARNVNGKAILYGDKITPSMAKAIGETERRREKQQKYNEEHGITPQGLNKKVVDILALGQNIAKTKAKGRGKSRPIVEPDNVPMDMSPKALQQKIHELEGLMMQHAQNLEFEEAAQIRDQLHQLRELFIAAS</sequence>